<sequence>MDKNQIIGISLISVLMLGYFGFMSTQTPETPVTTPPAITQPVQSDTVLLKSAATDTALKAQNQREYGDFAAAMVGEAKEYKLENKDVVVTLSTKGGTIKSVLLKNYFTWDKKQLFLFKQENNQLSLILNTNKKPVDLYSLYYAGVESKAGDKQVVTFKTDAGNGKTIEHTYTLGAAGFTVDYNLKAAGFGGELPNLPLTLDWREQVERIEYDSEQARVKSTVNYMAAEDGFDYLSEASKDRETETLSNVYWVSLKQKFFNSGFYIREGGTIPSATVTAYPMYSTLPNAPVNSEKFIKALEAQVQLPLEAVISGKAAYAFYFGPNDFKICKAVPAENYQKNVNLGWPLVSWINRFVVIPVFDGLKGVFSSFGLIIVILVLLIKLVLLPLSYKSFVSMAKMKALKPELDELKAKHGDDQQAIQMEQMQVYKQFGINPLSGCIPVLLQMPILLAMFNFFPNAIDLRGESLWWATDLSSYDEFAKLPFTIPFYGSHVSMFTLLMTISTLAYTWVNNQVSTVTGPMKYMSYAMPVVFLFVLNSFPAGLSFYYFVSNLVTIAQQLIIRRFVDEGQLRLQLEAKRDKNLSGDTTGGAPKKNRFMARMEEAMKQREQEQQFKKNIKKK</sequence>
<name>YIDC_CYTH3</name>
<protein>
    <recommendedName>
        <fullName evidence="1">Membrane protein insertase YidC</fullName>
    </recommendedName>
    <alternativeName>
        <fullName evidence="1">Foldase YidC</fullName>
    </alternativeName>
    <alternativeName>
        <fullName evidence="1">Membrane integrase YidC</fullName>
    </alternativeName>
    <alternativeName>
        <fullName evidence="1">Membrane protein YidC</fullName>
    </alternativeName>
</protein>
<reference key="1">
    <citation type="journal article" date="2007" name="Appl. Environ. Microbiol.">
        <title>Genome sequence of the cellulolytic gliding bacterium Cytophaga hutchinsonii.</title>
        <authorList>
            <person name="Xie G."/>
            <person name="Bruce D.C."/>
            <person name="Challacombe J.F."/>
            <person name="Chertkov O."/>
            <person name="Detter J.C."/>
            <person name="Gilna P."/>
            <person name="Han C.S."/>
            <person name="Lucas S."/>
            <person name="Misra M."/>
            <person name="Myers G.L."/>
            <person name="Richardson P."/>
            <person name="Tapia R."/>
            <person name="Thayer N."/>
            <person name="Thompson L.S."/>
            <person name="Brettin T.S."/>
            <person name="Henrissat B."/>
            <person name="Wilson D.B."/>
            <person name="McBride M.J."/>
        </authorList>
    </citation>
    <scope>NUCLEOTIDE SEQUENCE [LARGE SCALE GENOMIC DNA]</scope>
    <source>
        <strain>ATCC 33406 / DSM 1761 / JCM 20678 / CIP 103989 / IAM 12607 / NBRC 15051 / NCIMB 9469 / D465</strain>
    </source>
</reference>
<proteinExistence type="inferred from homology"/>
<accession>Q11S04</accession>
<dbReference type="EMBL" id="CP000383">
    <property type="protein sequence ID" value="ABG59810.1"/>
    <property type="molecule type" value="Genomic_DNA"/>
</dbReference>
<dbReference type="RefSeq" id="WP_011585920.1">
    <property type="nucleotide sequence ID" value="NC_008255.1"/>
</dbReference>
<dbReference type="SMR" id="Q11S04"/>
<dbReference type="STRING" id="269798.CHU_2557"/>
<dbReference type="KEGG" id="chu:CHU_2557"/>
<dbReference type="eggNOG" id="COG0706">
    <property type="taxonomic scope" value="Bacteria"/>
</dbReference>
<dbReference type="HOGENOM" id="CLU_016535_2_0_10"/>
<dbReference type="OrthoDB" id="9780552at2"/>
<dbReference type="Proteomes" id="UP000001822">
    <property type="component" value="Chromosome"/>
</dbReference>
<dbReference type="GO" id="GO:0005886">
    <property type="term" value="C:plasma membrane"/>
    <property type="evidence" value="ECO:0007669"/>
    <property type="project" value="UniProtKB-SubCell"/>
</dbReference>
<dbReference type="GO" id="GO:0032977">
    <property type="term" value="F:membrane insertase activity"/>
    <property type="evidence" value="ECO:0007669"/>
    <property type="project" value="InterPro"/>
</dbReference>
<dbReference type="GO" id="GO:0051205">
    <property type="term" value="P:protein insertion into membrane"/>
    <property type="evidence" value="ECO:0007669"/>
    <property type="project" value="TreeGrafter"/>
</dbReference>
<dbReference type="GO" id="GO:0015031">
    <property type="term" value="P:protein transport"/>
    <property type="evidence" value="ECO:0007669"/>
    <property type="project" value="UniProtKB-KW"/>
</dbReference>
<dbReference type="CDD" id="cd20070">
    <property type="entry name" value="5TM_YidC_Alb3"/>
    <property type="match status" value="1"/>
</dbReference>
<dbReference type="CDD" id="cd19961">
    <property type="entry name" value="EcYidC-like_peri"/>
    <property type="match status" value="1"/>
</dbReference>
<dbReference type="Gene3D" id="2.70.98.90">
    <property type="match status" value="1"/>
</dbReference>
<dbReference type="HAMAP" id="MF_01810">
    <property type="entry name" value="YidC_type1"/>
    <property type="match status" value="1"/>
</dbReference>
<dbReference type="InterPro" id="IPR019998">
    <property type="entry name" value="Membr_insert_YidC"/>
</dbReference>
<dbReference type="InterPro" id="IPR028053">
    <property type="entry name" value="Membr_insert_YidC_N"/>
</dbReference>
<dbReference type="InterPro" id="IPR001708">
    <property type="entry name" value="YidC/ALB3/OXA1/COX18"/>
</dbReference>
<dbReference type="InterPro" id="IPR028055">
    <property type="entry name" value="YidC/Oxa/ALB_C"/>
</dbReference>
<dbReference type="InterPro" id="IPR047196">
    <property type="entry name" value="YidC_ALB_C"/>
</dbReference>
<dbReference type="InterPro" id="IPR038221">
    <property type="entry name" value="YidC_periplasmic_sf"/>
</dbReference>
<dbReference type="NCBIfam" id="NF002356">
    <property type="entry name" value="PRK01318.2-3"/>
    <property type="match status" value="1"/>
</dbReference>
<dbReference type="NCBIfam" id="TIGR03593">
    <property type="entry name" value="yidC_nterm"/>
    <property type="match status" value="1"/>
</dbReference>
<dbReference type="NCBIfam" id="TIGR03592">
    <property type="entry name" value="yidC_oxa1_cterm"/>
    <property type="match status" value="1"/>
</dbReference>
<dbReference type="PANTHER" id="PTHR12428:SF65">
    <property type="entry name" value="CYTOCHROME C OXIDASE ASSEMBLY PROTEIN COX18, MITOCHONDRIAL"/>
    <property type="match status" value="1"/>
</dbReference>
<dbReference type="PANTHER" id="PTHR12428">
    <property type="entry name" value="OXA1"/>
    <property type="match status" value="1"/>
</dbReference>
<dbReference type="Pfam" id="PF02096">
    <property type="entry name" value="60KD_IMP"/>
    <property type="match status" value="1"/>
</dbReference>
<dbReference type="Pfam" id="PF14849">
    <property type="entry name" value="YidC_periplas"/>
    <property type="match status" value="1"/>
</dbReference>
<dbReference type="PRINTS" id="PR00701">
    <property type="entry name" value="60KDINNERMP"/>
</dbReference>
<evidence type="ECO:0000255" key="1">
    <source>
        <dbReference type="HAMAP-Rule" id="MF_01810"/>
    </source>
</evidence>
<organism>
    <name type="scientific">Cytophaga hutchinsonii (strain ATCC 33406 / DSM 1761 / CIP 103989 / NBRC 15051 / NCIMB 9469 / D465)</name>
    <dbReference type="NCBI Taxonomy" id="269798"/>
    <lineage>
        <taxon>Bacteria</taxon>
        <taxon>Pseudomonadati</taxon>
        <taxon>Bacteroidota</taxon>
        <taxon>Cytophagia</taxon>
        <taxon>Cytophagales</taxon>
        <taxon>Cytophagaceae</taxon>
        <taxon>Cytophaga</taxon>
    </lineage>
</organism>
<gene>
    <name evidence="1" type="primary">yidC</name>
    <name type="ordered locus">CHU_2557</name>
</gene>
<feature type="chain" id="PRO_1000070083" description="Membrane protein insertase YidC">
    <location>
        <begin position="1"/>
        <end position="620"/>
    </location>
</feature>
<feature type="transmembrane region" description="Helical" evidence="1">
    <location>
        <begin position="5"/>
        <end position="25"/>
    </location>
</feature>
<feature type="transmembrane region" description="Helical" evidence="1">
    <location>
        <begin position="343"/>
        <end position="363"/>
    </location>
</feature>
<feature type="transmembrane region" description="Helical" evidence="1">
    <location>
        <begin position="366"/>
        <end position="386"/>
    </location>
</feature>
<feature type="transmembrane region" description="Helical" evidence="1">
    <location>
        <begin position="436"/>
        <end position="456"/>
    </location>
</feature>
<feature type="transmembrane region" description="Helical" evidence="1">
    <location>
        <begin position="482"/>
        <end position="502"/>
    </location>
</feature>
<feature type="transmembrane region" description="Helical" evidence="1">
    <location>
        <begin position="529"/>
        <end position="549"/>
    </location>
</feature>
<keyword id="KW-0997">Cell inner membrane</keyword>
<keyword id="KW-1003">Cell membrane</keyword>
<keyword id="KW-0143">Chaperone</keyword>
<keyword id="KW-0472">Membrane</keyword>
<keyword id="KW-0653">Protein transport</keyword>
<keyword id="KW-1185">Reference proteome</keyword>
<keyword id="KW-0812">Transmembrane</keyword>
<keyword id="KW-1133">Transmembrane helix</keyword>
<keyword id="KW-0813">Transport</keyword>
<comment type="function">
    <text evidence="1">Required for the insertion and/or proper folding and/or complex formation of integral membrane proteins into the membrane. Involved in integration of membrane proteins that insert both dependently and independently of the Sec translocase complex, as well as at least some lipoproteins. Aids folding of multispanning membrane proteins.</text>
</comment>
<comment type="subunit">
    <text evidence="1">Interacts with the Sec translocase complex via SecD. Specifically interacts with transmembrane segments of nascent integral membrane proteins during membrane integration.</text>
</comment>
<comment type="subcellular location">
    <subcellularLocation>
        <location evidence="1">Cell inner membrane</location>
        <topology evidence="1">Multi-pass membrane protein</topology>
    </subcellularLocation>
</comment>
<comment type="similarity">
    <text evidence="1">Belongs to the OXA1/ALB3/YidC family. Type 1 subfamily.</text>
</comment>